<protein>
    <recommendedName>
        <fullName evidence="1">Lipoyl synthase</fullName>
        <ecNumber evidence="1">2.8.1.8</ecNumber>
    </recommendedName>
    <alternativeName>
        <fullName evidence="1">Lip-syn</fullName>
        <shortName evidence="1">LS</shortName>
    </alternativeName>
    <alternativeName>
        <fullName evidence="1">Lipoate synthase</fullName>
    </alternativeName>
    <alternativeName>
        <fullName evidence="1">Lipoic acid synthase</fullName>
    </alternativeName>
    <alternativeName>
        <fullName evidence="1">Sulfur insertion protein LipA</fullName>
    </alternativeName>
</protein>
<feature type="chain" id="PRO_1000012225" description="Lipoyl synthase">
    <location>
        <begin position="1"/>
        <end position="283"/>
    </location>
</feature>
<feature type="domain" description="Radical SAM core" evidence="2">
    <location>
        <begin position="47"/>
        <end position="262"/>
    </location>
</feature>
<feature type="binding site" evidence="1">
    <location>
        <position position="35"/>
    </location>
    <ligand>
        <name>[4Fe-4S] cluster</name>
        <dbReference type="ChEBI" id="CHEBI:49883"/>
        <label>1</label>
    </ligand>
</feature>
<feature type="binding site" evidence="1">
    <location>
        <position position="40"/>
    </location>
    <ligand>
        <name>[4Fe-4S] cluster</name>
        <dbReference type="ChEBI" id="CHEBI:49883"/>
        <label>1</label>
    </ligand>
</feature>
<feature type="binding site" evidence="1">
    <location>
        <position position="46"/>
    </location>
    <ligand>
        <name>[4Fe-4S] cluster</name>
        <dbReference type="ChEBI" id="CHEBI:49883"/>
        <label>1</label>
    </ligand>
</feature>
<feature type="binding site" evidence="1">
    <location>
        <position position="61"/>
    </location>
    <ligand>
        <name>[4Fe-4S] cluster</name>
        <dbReference type="ChEBI" id="CHEBI:49883"/>
        <label>2</label>
        <note>4Fe-4S-S-AdoMet</note>
    </ligand>
</feature>
<feature type="binding site" evidence="1">
    <location>
        <position position="65"/>
    </location>
    <ligand>
        <name>[4Fe-4S] cluster</name>
        <dbReference type="ChEBI" id="CHEBI:49883"/>
        <label>2</label>
        <note>4Fe-4S-S-AdoMet</note>
    </ligand>
</feature>
<feature type="binding site" evidence="1">
    <location>
        <position position="68"/>
    </location>
    <ligand>
        <name>[4Fe-4S] cluster</name>
        <dbReference type="ChEBI" id="CHEBI:49883"/>
        <label>2</label>
        <note>4Fe-4S-S-AdoMet</note>
    </ligand>
</feature>
<feature type="binding site" evidence="1">
    <location>
        <position position="273"/>
    </location>
    <ligand>
        <name>[4Fe-4S] cluster</name>
        <dbReference type="ChEBI" id="CHEBI:49883"/>
        <label>1</label>
    </ligand>
</feature>
<sequence>MTIVRKPQWLQKKINPAAHAGMEGLLGELRLHTVCQEARCPNITECFRERQATFLILGAACTRLCSFCNVTKQTPIPPDPGEPDRVAEAIRRLGLSHVVITSPTRDDLPDGGAGHYAETVAAIRSASPATTVELLIPDYLGNRESLARVVASAPAIIGHNVETVPRLYQIRAGADYGRSLGVLRTLRELDPVVRSKSGIMLGLGEAEEEVLAVFADLRSVGCSYLSIGQYLAPSKSHHPVREFIPPECFERYRAAALATGFAHVESGPYVRSSYHAARYDGQL</sequence>
<dbReference type="EC" id="2.8.1.8" evidence="1"/>
<dbReference type="EMBL" id="CP000148">
    <property type="protein sequence ID" value="ABB33363.1"/>
    <property type="molecule type" value="Genomic_DNA"/>
</dbReference>
<dbReference type="RefSeq" id="WP_004513866.1">
    <property type="nucleotide sequence ID" value="NC_007517.1"/>
</dbReference>
<dbReference type="SMR" id="Q39QW1"/>
<dbReference type="STRING" id="269799.Gmet_3150"/>
<dbReference type="KEGG" id="gme:Gmet_3150"/>
<dbReference type="eggNOG" id="COG0320">
    <property type="taxonomic scope" value="Bacteria"/>
</dbReference>
<dbReference type="HOGENOM" id="CLU_033144_2_1_7"/>
<dbReference type="UniPathway" id="UPA00538">
    <property type="reaction ID" value="UER00593"/>
</dbReference>
<dbReference type="Proteomes" id="UP000007073">
    <property type="component" value="Chromosome"/>
</dbReference>
<dbReference type="GO" id="GO:0005737">
    <property type="term" value="C:cytoplasm"/>
    <property type="evidence" value="ECO:0007669"/>
    <property type="project" value="UniProtKB-SubCell"/>
</dbReference>
<dbReference type="GO" id="GO:0051539">
    <property type="term" value="F:4 iron, 4 sulfur cluster binding"/>
    <property type="evidence" value="ECO:0007669"/>
    <property type="project" value="UniProtKB-UniRule"/>
</dbReference>
<dbReference type="GO" id="GO:0016992">
    <property type="term" value="F:lipoate synthase activity"/>
    <property type="evidence" value="ECO:0007669"/>
    <property type="project" value="UniProtKB-UniRule"/>
</dbReference>
<dbReference type="GO" id="GO:0046872">
    <property type="term" value="F:metal ion binding"/>
    <property type="evidence" value="ECO:0007669"/>
    <property type="project" value="UniProtKB-KW"/>
</dbReference>
<dbReference type="CDD" id="cd01335">
    <property type="entry name" value="Radical_SAM"/>
    <property type="match status" value="1"/>
</dbReference>
<dbReference type="FunFam" id="3.20.20.70:FF:000186">
    <property type="entry name" value="Lipoyl synthase"/>
    <property type="match status" value="1"/>
</dbReference>
<dbReference type="Gene3D" id="3.20.20.70">
    <property type="entry name" value="Aldolase class I"/>
    <property type="match status" value="1"/>
</dbReference>
<dbReference type="HAMAP" id="MF_00206">
    <property type="entry name" value="Lipoyl_synth"/>
    <property type="match status" value="1"/>
</dbReference>
<dbReference type="InterPro" id="IPR013785">
    <property type="entry name" value="Aldolase_TIM"/>
</dbReference>
<dbReference type="InterPro" id="IPR006638">
    <property type="entry name" value="Elp3/MiaA/NifB-like_rSAM"/>
</dbReference>
<dbReference type="InterPro" id="IPR003698">
    <property type="entry name" value="Lipoyl_synth"/>
</dbReference>
<dbReference type="InterPro" id="IPR007197">
    <property type="entry name" value="rSAM"/>
</dbReference>
<dbReference type="NCBIfam" id="TIGR00510">
    <property type="entry name" value="lipA"/>
    <property type="match status" value="1"/>
</dbReference>
<dbReference type="NCBIfam" id="NF004019">
    <property type="entry name" value="PRK05481.1"/>
    <property type="match status" value="1"/>
</dbReference>
<dbReference type="NCBIfam" id="NF009544">
    <property type="entry name" value="PRK12928.1"/>
    <property type="match status" value="1"/>
</dbReference>
<dbReference type="PANTHER" id="PTHR10949">
    <property type="entry name" value="LIPOYL SYNTHASE"/>
    <property type="match status" value="1"/>
</dbReference>
<dbReference type="PANTHER" id="PTHR10949:SF0">
    <property type="entry name" value="LIPOYL SYNTHASE, MITOCHONDRIAL"/>
    <property type="match status" value="1"/>
</dbReference>
<dbReference type="Pfam" id="PF04055">
    <property type="entry name" value="Radical_SAM"/>
    <property type="match status" value="1"/>
</dbReference>
<dbReference type="PIRSF" id="PIRSF005963">
    <property type="entry name" value="Lipoyl_synth"/>
    <property type="match status" value="1"/>
</dbReference>
<dbReference type="SFLD" id="SFLDF00271">
    <property type="entry name" value="lipoyl_synthase"/>
    <property type="match status" value="1"/>
</dbReference>
<dbReference type="SFLD" id="SFLDS00029">
    <property type="entry name" value="Radical_SAM"/>
    <property type="match status" value="1"/>
</dbReference>
<dbReference type="SMART" id="SM00729">
    <property type="entry name" value="Elp3"/>
    <property type="match status" value="1"/>
</dbReference>
<dbReference type="SUPFAM" id="SSF102114">
    <property type="entry name" value="Radical SAM enzymes"/>
    <property type="match status" value="1"/>
</dbReference>
<dbReference type="PROSITE" id="PS51918">
    <property type="entry name" value="RADICAL_SAM"/>
    <property type="match status" value="1"/>
</dbReference>
<name>LIPA_GEOMG</name>
<keyword id="KW-0004">4Fe-4S</keyword>
<keyword id="KW-0963">Cytoplasm</keyword>
<keyword id="KW-0408">Iron</keyword>
<keyword id="KW-0411">Iron-sulfur</keyword>
<keyword id="KW-0479">Metal-binding</keyword>
<keyword id="KW-1185">Reference proteome</keyword>
<keyword id="KW-0949">S-adenosyl-L-methionine</keyword>
<keyword id="KW-0808">Transferase</keyword>
<accession>Q39QW1</accession>
<proteinExistence type="inferred from homology"/>
<organism>
    <name type="scientific">Geobacter metallireducens (strain ATCC 53774 / DSM 7210 / GS-15)</name>
    <dbReference type="NCBI Taxonomy" id="269799"/>
    <lineage>
        <taxon>Bacteria</taxon>
        <taxon>Pseudomonadati</taxon>
        <taxon>Thermodesulfobacteriota</taxon>
        <taxon>Desulfuromonadia</taxon>
        <taxon>Geobacterales</taxon>
        <taxon>Geobacteraceae</taxon>
        <taxon>Geobacter</taxon>
    </lineage>
</organism>
<gene>
    <name evidence="1" type="primary">lipA</name>
    <name type="ordered locus">Gmet_3150</name>
</gene>
<evidence type="ECO:0000255" key="1">
    <source>
        <dbReference type="HAMAP-Rule" id="MF_00206"/>
    </source>
</evidence>
<evidence type="ECO:0000255" key="2">
    <source>
        <dbReference type="PROSITE-ProRule" id="PRU01266"/>
    </source>
</evidence>
<reference key="1">
    <citation type="journal article" date="2009" name="BMC Microbiol.">
        <title>The genome sequence of Geobacter metallireducens: features of metabolism, physiology and regulation common and dissimilar to Geobacter sulfurreducens.</title>
        <authorList>
            <person name="Aklujkar M."/>
            <person name="Krushkal J."/>
            <person name="DiBartolo G."/>
            <person name="Lapidus A."/>
            <person name="Land M.L."/>
            <person name="Lovley D.R."/>
        </authorList>
    </citation>
    <scope>NUCLEOTIDE SEQUENCE [LARGE SCALE GENOMIC DNA]</scope>
    <source>
        <strain>ATCC 53774 / DSM 7210 / GS-15</strain>
    </source>
</reference>
<comment type="function">
    <text evidence="1">Catalyzes the radical-mediated insertion of two sulfur atoms into the C-6 and C-8 positions of the octanoyl moiety bound to the lipoyl domains of lipoate-dependent enzymes, thereby converting the octanoylated domains into lipoylated derivatives.</text>
</comment>
<comment type="catalytic activity">
    <reaction evidence="1">
        <text>[[Fe-S] cluster scaffold protein carrying a second [4Fe-4S](2+) cluster] + N(6)-octanoyl-L-lysyl-[protein] + 2 oxidized [2Fe-2S]-[ferredoxin] + 2 S-adenosyl-L-methionine + 4 H(+) = [[Fe-S] cluster scaffold protein] + N(6)-[(R)-dihydrolipoyl]-L-lysyl-[protein] + 4 Fe(3+) + 2 hydrogen sulfide + 2 5'-deoxyadenosine + 2 L-methionine + 2 reduced [2Fe-2S]-[ferredoxin]</text>
        <dbReference type="Rhea" id="RHEA:16585"/>
        <dbReference type="Rhea" id="RHEA-COMP:9928"/>
        <dbReference type="Rhea" id="RHEA-COMP:10000"/>
        <dbReference type="Rhea" id="RHEA-COMP:10001"/>
        <dbReference type="Rhea" id="RHEA-COMP:10475"/>
        <dbReference type="Rhea" id="RHEA-COMP:14568"/>
        <dbReference type="Rhea" id="RHEA-COMP:14569"/>
        <dbReference type="ChEBI" id="CHEBI:15378"/>
        <dbReference type="ChEBI" id="CHEBI:17319"/>
        <dbReference type="ChEBI" id="CHEBI:29034"/>
        <dbReference type="ChEBI" id="CHEBI:29919"/>
        <dbReference type="ChEBI" id="CHEBI:33722"/>
        <dbReference type="ChEBI" id="CHEBI:33737"/>
        <dbReference type="ChEBI" id="CHEBI:33738"/>
        <dbReference type="ChEBI" id="CHEBI:57844"/>
        <dbReference type="ChEBI" id="CHEBI:59789"/>
        <dbReference type="ChEBI" id="CHEBI:78809"/>
        <dbReference type="ChEBI" id="CHEBI:83100"/>
        <dbReference type="EC" id="2.8.1.8"/>
    </reaction>
</comment>
<comment type="cofactor">
    <cofactor evidence="1">
        <name>[4Fe-4S] cluster</name>
        <dbReference type="ChEBI" id="CHEBI:49883"/>
    </cofactor>
    <text evidence="1">Binds 2 [4Fe-4S] clusters per subunit. One cluster is coordinated with 3 cysteines and an exchangeable S-adenosyl-L-methionine.</text>
</comment>
<comment type="pathway">
    <text evidence="1">Protein modification; protein lipoylation via endogenous pathway; protein N(6)-(lipoyl)lysine from octanoyl-[acyl-carrier-protein]: step 2/2.</text>
</comment>
<comment type="subcellular location">
    <subcellularLocation>
        <location evidence="1">Cytoplasm</location>
    </subcellularLocation>
</comment>
<comment type="similarity">
    <text evidence="1">Belongs to the radical SAM superfamily. Lipoyl synthase family.</text>
</comment>